<comment type="function">
    <text evidence="4 8 9 13 14">Serine/threonine-protein kinase that phosphorylates histone H3 at 'Thr-3' (H3T3ph) during mitosis. May act through H3T3ph to both position and modulate activation of AURKB and other components of the chromosomal passenger complex (CPC) at centromeres to ensure proper chromatid cohesion, metaphase alignment and normal progression through the cell cycle.</text>
</comment>
<comment type="catalytic activity">
    <reaction evidence="11 12">
        <text>L-seryl-[protein] + ATP = O-phospho-L-seryl-[protein] + ADP + H(+)</text>
        <dbReference type="Rhea" id="RHEA:17989"/>
        <dbReference type="Rhea" id="RHEA-COMP:9863"/>
        <dbReference type="Rhea" id="RHEA-COMP:11604"/>
        <dbReference type="ChEBI" id="CHEBI:15378"/>
        <dbReference type="ChEBI" id="CHEBI:29999"/>
        <dbReference type="ChEBI" id="CHEBI:30616"/>
        <dbReference type="ChEBI" id="CHEBI:83421"/>
        <dbReference type="ChEBI" id="CHEBI:456216"/>
        <dbReference type="EC" id="2.7.11.1"/>
    </reaction>
</comment>
<comment type="catalytic activity">
    <reaction evidence="11 12">
        <text>L-threonyl-[protein] + ATP = O-phospho-L-threonyl-[protein] + ADP + H(+)</text>
        <dbReference type="Rhea" id="RHEA:46608"/>
        <dbReference type="Rhea" id="RHEA-COMP:11060"/>
        <dbReference type="Rhea" id="RHEA-COMP:11605"/>
        <dbReference type="ChEBI" id="CHEBI:15378"/>
        <dbReference type="ChEBI" id="CHEBI:30013"/>
        <dbReference type="ChEBI" id="CHEBI:30616"/>
        <dbReference type="ChEBI" id="CHEBI:61977"/>
        <dbReference type="ChEBI" id="CHEBI:456216"/>
        <dbReference type="EC" id="2.7.11.1"/>
    </reaction>
</comment>
<comment type="cofactor">
    <cofactor evidence="4 12">
        <name>Mg(2+)</name>
        <dbReference type="ChEBI" id="CHEBI:18420"/>
    </cofactor>
</comment>
<comment type="activity regulation">
    <text evidence="12 15 16">Constitutive activity that does not require phosphorylation. Specifically inhibited by 3-(1H-indazol-5-yl)-N-propylimidazo[1,2-b]pyridazin-6-amine (CHR-6494).</text>
</comment>
<comment type="interaction">
    <interactant intactId="EBI-1237328">
        <id>Q8TF76</id>
    </interactant>
    <interactant intactId="EBI-7116203">
        <id>O75031</id>
        <label>HSF2BP</label>
    </interactant>
    <organismsDiffer>false</organismsDiffer>
    <experiments>3</experiments>
</comment>
<comment type="interaction">
    <interactant intactId="EBI-1237328">
        <id>Q8TF76</id>
    </interactant>
    <interactant intactId="EBI-352572">
        <id>P08238</id>
        <label>HSP90AB1</label>
    </interactant>
    <organismsDiffer>false</organismsDiffer>
    <experiments>2</experiments>
</comment>
<comment type="interaction">
    <interactant intactId="EBI-1237328">
        <id>Q8TF76</id>
    </interactant>
    <interactant intactId="EBI-724076">
        <id>Q99750</id>
        <label>MDFI</label>
    </interactant>
    <organismsDiffer>false</organismsDiffer>
    <experiments>3</experiments>
</comment>
<comment type="interaction">
    <interactant intactId="EBI-15815652">
        <id>Q8TF76-1</id>
    </interactant>
    <interactant intactId="EBI-2658213">
        <id>P84228</id>
        <label>H3c7</label>
    </interactant>
    <organismsDiffer>true</organismsDiffer>
    <experiments>3</experiments>
</comment>
<comment type="subcellular location">
    <subcellularLocation>
        <location evidence="8">Nucleus</location>
    </subcellularLocation>
    <subcellularLocation>
        <location evidence="8">Chromosome</location>
    </subcellularLocation>
    <subcellularLocation>
        <location evidence="8">Cytoplasm</location>
        <location evidence="8">Cytoskeleton</location>
        <location evidence="8">Spindle</location>
    </subcellularLocation>
    <text>Nuclear during interphase and associates with the chromosomes and spindle apparatus during mitosis.</text>
</comment>
<comment type="alternative products">
    <event type="alternative splicing"/>
    <isoform>
        <id>Q8TF76-1</id>
        <name evidence="4 5">1</name>
        <sequence type="displayed"/>
    </isoform>
    <isoform>
        <id>Q8TF76-2</id>
        <name evidence="17">2</name>
        <sequence type="described" ref="VSP_050671 VSP_050672"/>
    </isoform>
</comment>
<comment type="tissue specificity">
    <text evidence="4 5">Strongly expressed in testis. Also present in thymus and bone marrow and low levels observed in prostate, intestine, lung, spleen and lymph node. Expressed in fetal skin, liver, kidney and small intestine and also in proliferating but not non-proliferating cell lines.</text>
</comment>
<comment type="PTM">
    <text evidence="1 8 15">Autophosphorylated on both serine and threonine residues (By similarity). Strongly phosphorylated during mitosis but this does not appear to significantly affect its intrinsic kinase activity. Phosphorylation by AURKB is required for full activity toward histone H3 at 'Ser-3' in mitosis.</text>
</comment>
<comment type="similarity">
    <text evidence="2">Belongs to the protein kinase superfamily. Ser/Thr protein kinase family. Haspin subfamily.</text>
</comment>
<sequence length="798" mass="88495">MAASLPGPGSRLFRTYGAADGRRQRRPGREAAQWFPPQDRRRFFNSSGSSDASIGDPSQSDDPDDPDDPDFPGSPVRRRRRRPGGRVPKDRPSLTVTPKRWKLRARPSLTVTPRRLGLRARPPQKCSTPCGPLRLPPFPSRDSGRLSPDLSVCGQPRDGDELGISASLFSSLASPCPGSPTPRDSVISIGTSACLVAASAVPSGLHLPEVSLDRASLPCSQEEATGGAKDTRMVHQTRASLRSVLFGLMNSGTPEDSEFRADGKNMRESCCKRKLVVGNGPEGPGLSSTGKRRATGQDSCQERGLQEAVRREHQEASVPKGRIVPRGIDRLERTRSSRKSKHQEATETSLLHSHRFKKGQKLGKDSFPTQDLTPLQNVCFWTKTRASFSFHKKKIVTDVSEVCSIYTTATSLSGSLLSECSNRPVMNRTSGAPSSWHSSSMYLLSPLNTLSISNKKASDAEKVYGECSQKGPVPFSHCLPTEKLQRCEKIGEGVFGEVFQTIADHTPVAIKIIAIEGPDLVNGSHQKTFEEILPEIIISKELSLLSGEVCNRTEGFIGLNSVHCVQGSYPPLLLKAWDHYNSTKGSANDRPDFFKDDQLFIVLEFEFGGIDLEQMRTKLSSLATAKSILHQLTASLAVAEASLRFEHRDLHWGNVLLKKTSLKKLHYTLNGKSSTIPSCGLQVSIIDYTLSRLERDGIVVFCDVSMDEDLFTGDGDYQFDIYRLMKKENNNRWGEYHPYSNVLWLHYLTDKMLKQMTFKTKCNTPAMKQIKRKIQEFHRTMLNFSSATDLLCQHSLFK</sequence>
<evidence type="ECO:0000250" key="1"/>
<evidence type="ECO:0000255" key="2">
    <source>
        <dbReference type="PROSITE-ProRule" id="PRU00159"/>
    </source>
</evidence>
<evidence type="ECO:0000256" key="3">
    <source>
        <dbReference type="SAM" id="MobiDB-lite"/>
    </source>
</evidence>
<evidence type="ECO:0000269" key="4">
    <source>
    </source>
</evidence>
<evidence type="ECO:0000269" key="5">
    <source>
    </source>
</evidence>
<evidence type="ECO:0000269" key="6">
    <source>
    </source>
</evidence>
<evidence type="ECO:0000269" key="7">
    <source>
    </source>
</evidence>
<evidence type="ECO:0000269" key="8">
    <source>
    </source>
</evidence>
<evidence type="ECO:0000269" key="9">
    <source>
    </source>
</evidence>
<evidence type="ECO:0000269" key="10">
    <source>
    </source>
</evidence>
<evidence type="ECO:0000269" key="11">
    <source>
    </source>
</evidence>
<evidence type="ECO:0000269" key="12">
    <source>
    </source>
</evidence>
<evidence type="ECO:0000269" key="13">
    <source>
    </source>
</evidence>
<evidence type="ECO:0000269" key="14">
    <source>
    </source>
</evidence>
<evidence type="ECO:0000269" key="15">
    <source>
    </source>
</evidence>
<evidence type="ECO:0000269" key="16">
    <source>
    </source>
</evidence>
<evidence type="ECO:0000303" key="17">
    <source>
    </source>
</evidence>
<evidence type="ECO:0000305" key="18"/>
<evidence type="ECO:0000312" key="19">
    <source>
        <dbReference type="EMBL" id="AAK30300.1"/>
    </source>
</evidence>
<evidence type="ECO:0000312" key="20">
    <source>
        <dbReference type="HGNC" id="HGNC:19682"/>
    </source>
</evidence>
<evidence type="ECO:0007744" key="21">
    <source>
        <dbReference type="PDB" id="3DLZ"/>
    </source>
</evidence>
<evidence type="ECO:0007744" key="22">
    <source>
    </source>
</evidence>
<evidence type="ECO:0007744" key="23">
    <source>
    </source>
</evidence>
<evidence type="ECO:0007744" key="24">
    <source>
    </source>
</evidence>
<evidence type="ECO:0007829" key="25">
    <source>
        <dbReference type="PDB" id="3F2N"/>
    </source>
</evidence>
<evidence type="ECO:0007829" key="26">
    <source>
        <dbReference type="PDB" id="4QTC"/>
    </source>
</evidence>
<evidence type="ECO:0007829" key="27">
    <source>
        <dbReference type="PDB" id="7SQM"/>
    </source>
</evidence>
<keyword id="KW-0002">3D-structure</keyword>
<keyword id="KW-0025">Alternative splicing</keyword>
<keyword id="KW-0067">ATP-binding</keyword>
<keyword id="KW-0131">Cell cycle</keyword>
<keyword id="KW-0156">Chromatin regulator</keyword>
<keyword id="KW-0158">Chromosome</keyword>
<keyword id="KW-0963">Cytoplasm</keyword>
<keyword id="KW-0206">Cytoskeleton</keyword>
<keyword id="KW-0418">Kinase</keyword>
<keyword id="KW-0460">Magnesium</keyword>
<keyword id="KW-0547">Nucleotide-binding</keyword>
<keyword id="KW-0539">Nucleus</keyword>
<keyword id="KW-0597">Phosphoprotein</keyword>
<keyword id="KW-1267">Proteomics identification</keyword>
<keyword id="KW-1185">Reference proteome</keyword>
<keyword id="KW-0723">Serine/threonine-protein kinase</keyword>
<keyword id="KW-0808">Transferase</keyword>
<proteinExistence type="evidence at protein level"/>
<accession>Q8TF76</accession>
<accession>Q5U5K3</accession>
<accession>Q96MN1</accession>
<accession>Q9BXS7</accession>
<dbReference type="EC" id="2.7.11.1" evidence="11 12"/>
<dbReference type="EMBL" id="AB039834">
    <property type="protein sequence ID" value="BAB21938.3"/>
    <property type="molecule type" value="mRNA"/>
</dbReference>
<dbReference type="EMBL" id="AF289865">
    <property type="protein sequence ID" value="AAK30300.1"/>
    <property type="molecule type" value="mRNA"/>
</dbReference>
<dbReference type="EMBL" id="AK056691">
    <property type="protein sequence ID" value="BAB71255.1"/>
    <property type="molecule type" value="mRNA"/>
</dbReference>
<dbReference type="EMBL" id="AC116914">
    <property type="status" value="NOT_ANNOTATED_CDS"/>
    <property type="molecule type" value="Genomic_DNA"/>
</dbReference>
<dbReference type="EMBL" id="BC047457">
    <property type="protein sequence ID" value="AAH47457.1"/>
    <property type="molecule type" value="mRNA"/>
</dbReference>
<dbReference type="CCDS" id="CCDS11036.1">
    <molecule id="Q8TF76-1"/>
</dbReference>
<dbReference type="RefSeq" id="NP_114171.2">
    <molecule id="Q8TF76-1"/>
    <property type="nucleotide sequence ID" value="NM_031965.2"/>
</dbReference>
<dbReference type="PDB" id="2VUW">
    <property type="method" value="X-ray"/>
    <property type="resolution" value="1.80 A"/>
    <property type="chains" value="A=465-798"/>
</dbReference>
<dbReference type="PDB" id="2WB8">
    <property type="method" value="X-ray"/>
    <property type="resolution" value="2.15 A"/>
    <property type="chains" value="A=452-798"/>
</dbReference>
<dbReference type="PDB" id="3DLZ">
    <property type="method" value="X-ray"/>
    <property type="resolution" value="1.85 A"/>
    <property type="chains" value="A=465-798"/>
</dbReference>
<dbReference type="PDB" id="3E7V">
    <property type="method" value="X-ray"/>
    <property type="resolution" value="2.00 A"/>
    <property type="chains" value="A=471-798"/>
</dbReference>
<dbReference type="PDB" id="3F2N">
    <property type="method" value="X-ray"/>
    <property type="resolution" value="1.80 A"/>
    <property type="chains" value="A=465-798"/>
</dbReference>
<dbReference type="PDB" id="3FMD">
    <property type="method" value="X-ray"/>
    <property type="resolution" value="2.00 A"/>
    <property type="chains" value="A=470-798"/>
</dbReference>
<dbReference type="PDB" id="3IQ7">
    <property type="method" value="X-ray"/>
    <property type="resolution" value="2.00 A"/>
    <property type="chains" value="A=465-798"/>
</dbReference>
<dbReference type="PDB" id="4OUC">
    <property type="method" value="X-ray"/>
    <property type="resolution" value="1.90 A"/>
    <property type="chains" value="A=465-798"/>
</dbReference>
<dbReference type="PDB" id="4QTC">
    <property type="method" value="X-ray"/>
    <property type="resolution" value="1.40 A"/>
    <property type="chains" value="A=465-798"/>
</dbReference>
<dbReference type="PDB" id="5HTB">
    <property type="method" value="X-ray"/>
    <property type="resolution" value="1.70 A"/>
    <property type="chains" value="A=465-798"/>
</dbReference>
<dbReference type="PDB" id="5HTC">
    <property type="method" value="X-ray"/>
    <property type="resolution" value="1.50 A"/>
    <property type="chains" value="A=465-798"/>
</dbReference>
<dbReference type="PDB" id="6G34">
    <property type="method" value="X-ray"/>
    <property type="resolution" value="1.76 A"/>
    <property type="chains" value="A=465-798"/>
</dbReference>
<dbReference type="PDB" id="6G35">
    <property type="method" value="X-ray"/>
    <property type="resolution" value="1.55 A"/>
    <property type="chains" value="A=465-798"/>
</dbReference>
<dbReference type="PDB" id="6G36">
    <property type="method" value="X-ray"/>
    <property type="resolution" value="1.46 A"/>
    <property type="chains" value="A=465-798"/>
</dbReference>
<dbReference type="PDB" id="6G37">
    <property type="method" value="X-ray"/>
    <property type="resolution" value="1.48 A"/>
    <property type="chains" value="A=465-798"/>
</dbReference>
<dbReference type="PDB" id="6G38">
    <property type="method" value="X-ray"/>
    <property type="resolution" value="1.47 A"/>
    <property type="chains" value="A=465-798"/>
</dbReference>
<dbReference type="PDB" id="6G39">
    <property type="method" value="X-ray"/>
    <property type="resolution" value="1.45 A"/>
    <property type="chains" value="A=465-798"/>
</dbReference>
<dbReference type="PDB" id="6G3A">
    <property type="method" value="X-ray"/>
    <property type="resolution" value="1.43 A"/>
    <property type="chains" value="A=465-798"/>
</dbReference>
<dbReference type="PDB" id="6Z56">
    <property type="method" value="X-ray"/>
    <property type="resolution" value="1.90 A"/>
    <property type="chains" value="A=465-798"/>
</dbReference>
<dbReference type="PDB" id="6Z57">
    <property type="method" value="X-ray"/>
    <property type="resolution" value="1.50 A"/>
    <property type="chains" value="A=465-798"/>
</dbReference>
<dbReference type="PDB" id="6Z58">
    <property type="method" value="X-ray"/>
    <property type="resolution" value="1.80 A"/>
    <property type="chains" value="A=465-798"/>
</dbReference>
<dbReference type="PDB" id="6Z59">
    <property type="method" value="X-ray"/>
    <property type="resolution" value="2.00 A"/>
    <property type="chains" value="A=465-798"/>
</dbReference>
<dbReference type="PDB" id="6Z5A">
    <property type="method" value="X-ray"/>
    <property type="resolution" value="1.55 A"/>
    <property type="chains" value="A=465-798"/>
</dbReference>
<dbReference type="PDB" id="6Z5B">
    <property type="method" value="X-ray"/>
    <property type="resolution" value="1.90 A"/>
    <property type="chains" value="A=465-798"/>
</dbReference>
<dbReference type="PDB" id="6Z5C">
    <property type="method" value="X-ray"/>
    <property type="resolution" value="1.75 A"/>
    <property type="chains" value="A=465-798"/>
</dbReference>
<dbReference type="PDB" id="6Z5D">
    <property type="method" value="X-ray"/>
    <property type="resolution" value="1.75 A"/>
    <property type="chains" value="A=465-798"/>
</dbReference>
<dbReference type="PDB" id="6Z5E">
    <property type="method" value="X-ray"/>
    <property type="resolution" value="1.50 A"/>
    <property type="chains" value="A=465-798"/>
</dbReference>
<dbReference type="PDB" id="7AVQ">
    <property type="method" value="X-ray"/>
    <property type="resolution" value="1.65 A"/>
    <property type="chains" value="A=465-798"/>
</dbReference>
<dbReference type="PDB" id="7OPS">
    <property type="method" value="X-ray"/>
    <property type="resolution" value="2.38 A"/>
    <property type="chains" value="A=465-798"/>
</dbReference>
<dbReference type="PDB" id="7SQM">
    <property type="method" value="X-ray"/>
    <property type="resolution" value="1.78 A"/>
    <property type="chains" value="A=445-798"/>
</dbReference>
<dbReference type="PDB" id="8RDK">
    <property type="method" value="X-ray"/>
    <property type="resolution" value="2.00 A"/>
    <property type="chains" value="A=465-798"/>
</dbReference>
<dbReference type="PDB" id="9B2S">
    <property type="method" value="EM"/>
    <property type="resolution" value="3.01 A"/>
    <property type="chains" value="K=465-798"/>
</dbReference>
<dbReference type="PDB" id="9B2T">
    <property type="method" value="EM"/>
    <property type="resolution" value="2.99 A"/>
    <property type="chains" value="K=465-798"/>
</dbReference>
<dbReference type="PDB" id="9B2U">
    <property type="method" value="EM"/>
    <property type="resolution" value="3.64 A"/>
    <property type="chains" value="K=465-798"/>
</dbReference>
<dbReference type="PDB" id="9FLB">
    <property type="method" value="X-ray"/>
    <property type="resolution" value="2.50 A"/>
    <property type="chains" value="A=465-798"/>
</dbReference>
<dbReference type="PDB" id="9FLC">
    <property type="method" value="X-ray"/>
    <property type="resolution" value="2.18 A"/>
    <property type="chains" value="A=465-798"/>
</dbReference>
<dbReference type="PDB" id="9FLO">
    <property type="method" value="X-ray"/>
    <property type="resolution" value="2.90 A"/>
    <property type="chains" value="A=465-798"/>
</dbReference>
<dbReference type="PDB" id="9FLQ">
    <property type="method" value="X-ray"/>
    <property type="resolution" value="1.85 A"/>
    <property type="chains" value="A=465-798"/>
</dbReference>
<dbReference type="PDB" id="9FLR">
    <property type="method" value="X-ray"/>
    <property type="resolution" value="1.91 A"/>
    <property type="chains" value="A=465-798"/>
</dbReference>
<dbReference type="PDB" id="9FLT">
    <property type="method" value="X-ray"/>
    <property type="resolution" value="2.40 A"/>
    <property type="chains" value="A=465-798"/>
</dbReference>
<dbReference type="PDBsum" id="2VUW"/>
<dbReference type="PDBsum" id="2WB8"/>
<dbReference type="PDBsum" id="3DLZ"/>
<dbReference type="PDBsum" id="3E7V"/>
<dbReference type="PDBsum" id="3F2N"/>
<dbReference type="PDBsum" id="3FMD"/>
<dbReference type="PDBsum" id="3IQ7"/>
<dbReference type="PDBsum" id="4OUC"/>
<dbReference type="PDBsum" id="4QTC"/>
<dbReference type="PDBsum" id="5HTB"/>
<dbReference type="PDBsum" id="5HTC"/>
<dbReference type="PDBsum" id="6G34"/>
<dbReference type="PDBsum" id="6G35"/>
<dbReference type="PDBsum" id="6G36"/>
<dbReference type="PDBsum" id="6G37"/>
<dbReference type="PDBsum" id="6G38"/>
<dbReference type="PDBsum" id="6G39"/>
<dbReference type="PDBsum" id="6G3A"/>
<dbReference type="PDBsum" id="6Z56"/>
<dbReference type="PDBsum" id="6Z57"/>
<dbReference type="PDBsum" id="6Z58"/>
<dbReference type="PDBsum" id="6Z59"/>
<dbReference type="PDBsum" id="6Z5A"/>
<dbReference type="PDBsum" id="6Z5B"/>
<dbReference type="PDBsum" id="6Z5C"/>
<dbReference type="PDBsum" id="6Z5D"/>
<dbReference type="PDBsum" id="6Z5E"/>
<dbReference type="PDBsum" id="7AVQ"/>
<dbReference type="PDBsum" id="7OPS"/>
<dbReference type="PDBsum" id="7SQM"/>
<dbReference type="PDBsum" id="8RDK"/>
<dbReference type="PDBsum" id="9B2S"/>
<dbReference type="PDBsum" id="9B2T"/>
<dbReference type="PDBsum" id="9B2U"/>
<dbReference type="PDBsum" id="9FLB"/>
<dbReference type="PDBsum" id="9FLC"/>
<dbReference type="PDBsum" id="9FLO"/>
<dbReference type="PDBsum" id="9FLQ"/>
<dbReference type="PDBsum" id="9FLR"/>
<dbReference type="PDBsum" id="9FLT"/>
<dbReference type="EMDB" id="EMD-44113"/>
<dbReference type="EMDB" id="EMD-44114"/>
<dbReference type="EMDB" id="EMD-44115"/>
<dbReference type="SMR" id="Q8TF76"/>
<dbReference type="BioGRID" id="123814">
    <property type="interactions" value="129"/>
</dbReference>
<dbReference type="DIP" id="DIP-38174N"/>
<dbReference type="FunCoup" id="Q8TF76">
    <property type="interactions" value="1278"/>
</dbReference>
<dbReference type="IntAct" id="Q8TF76">
    <property type="interactions" value="119"/>
</dbReference>
<dbReference type="MINT" id="Q8TF76"/>
<dbReference type="STRING" id="9606.ENSP00000325290"/>
<dbReference type="BindingDB" id="Q8TF76"/>
<dbReference type="ChEMBL" id="CHEMBL1075163"/>
<dbReference type="DrugBank" id="DB08004">
    <property type="generic name" value="(2S)-2-{[3-(3-aminophenyl)imidazo[1,2-b]pyridazin-6-yl]amino}-3-methylbutan-1-ol"/>
</dbReference>
<dbReference type="DrugBank" id="DB07698">
    <property type="generic name" value="3-(3-aminophenyl)-N-(3-chlorophenyl)pyrazolo[1,5-a]pyrimidin-5-amine"/>
</dbReference>
<dbReference type="DrugBank" id="DB04604">
    <property type="generic name" value="5-iodotubercidin"/>
</dbReference>
<dbReference type="DrugBank" id="DB07995">
    <property type="generic name" value="H-89"/>
</dbReference>
<dbReference type="GuidetoPHARMACOLOGY" id="2028"/>
<dbReference type="GlyCosmos" id="Q8TF76">
    <property type="glycosylation" value="1 site, 1 glycan"/>
</dbReference>
<dbReference type="GlyGen" id="Q8TF76">
    <property type="glycosylation" value="2 sites, 1 O-linked glycan (1 site)"/>
</dbReference>
<dbReference type="iPTMnet" id="Q8TF76"/>
<dbReference type="PhosphoSitePlus" id="Q8TF76"/>
<dbReference type="BioMuta" id="HASPIN"/>
<dbReference type="DMDM" id="296439330"/>
<dbReference type="jPOST" id="Q8TF76"/>
<dbReference type="MassIVE" id="Q8TF76"/>
<dbReference type="PaxDb" id="9606-ENSP00000325290"/>
<dbReference type="PeptideAtlas" id="Q8TF76"/>
<dbReference type="ProteomicsDB" id="74576">
    <molecule id="Q8TF76-1"/>
</dbReference>
<dbReference type="ProteomicsDB" id="74577">
    <molecule id="Q8TF76-2"/>
</dbReference>
<dbReference type="Pumba" id="Q8TF76"/>
<dbReference type="Antibodypedia" id="23135">
    <property type="antibodies" value="156 antibodies from 24 providers"/>
</dbReference>
<dbReference type="DNASU" id="83903"/>
<dbReference type="Ensembl" id="ENST00000325418.5">
    <molecule id="Q8TF76-1"/>
    <property type="protein sequence ID" value="ENSP00000325290.4"/>
    <property type="gene ID" value="ENSG00000177602.5"/>
</dbReference>
<dbReference type="GeneID" id="83903"/>
<dbReference type="KEGG" id="hsa:83903"/>
<dbReference type="MANE-Select" id="ENST00000325418.5">
    <property type="protein sequence ID" value="ENSP00000325290.4"/>
    <property type="RefSeq nucleotide sequence ID" value="NM_031965.2"/>
    <property type="RefSeq protein sequence ID" value="NP_114171.2"/>
</dbReference>
<dbReference type="UCSC" id="uc002fwp.4">
    <molecule id="Q8TF76-1"/>
    <property type="organism name" value="human"/>
</dbReference>
<dbReference type="AGR" id="HGNC:19682"/>
<dbReference type="CTD" id="83903"/>
<dbReference type="DisGeNET" id="83903"/>
<dbReference type="GeneCards" id="HASPIN"/>
<dbReference type="HGNC" id="HGNC:19682">
    <property type="gene designation" value="HASPIN"/>
</dbReference>
<dbReference type="HPA" id="ENSG00000177602">
    <property type="expression patterns" value="Tissue enhanced (bone marrow, lymphoid tissue, testis)"/>
</dbReference>
<dbReference type="MIM" id="609240">
    <property type="type" value="gene"/>
</dbReference>
<dbReference type="neXtProt" id="NX_Q8TF76"/>
<dbReference type="OpenTargets" id="ENSG00000177602"/>
<dbReference type="PharmGKB" id="PA134909705"/>
<dbReference type="VEuPathDB" id="HostDB:ENSG00000177602"/>
<dbReference type="eggNOG" id="KOG2464">
    <property type="taxonomic scope" value="Eukaryota"/>
</dbReference>
<dbReference type="GeneTree" id="ENSGT00390000013015"/>
<dbReference type="HOGENOM" id="CLU_355235_0_0_1"/>
<dbReference type="InParanoid" id="Q8TF76"/>
<dbReference type="OMA" id="LCQHSLF"/>
<dbReference type="OrthoDB" id="21018at2759"/>
<dbReference type="PAN-GO" id="Q8TF76">
    <property type="GO annotations" value="5 GO annotations based on evolutionary models"/>
</dbReference>
<dbReference type="PhylomeDB" id="Q8TF76"/>
<dbReference type="TreeFam" id="TF313895"/>
<dbReference type="PathwayCommons" id="Q8TF76"/>
<dbReference type="SignaLink" id="Q8TF76"/>
<dbReference type="SIGNOR" id="Q8TF76"/>
<dbReference type="BioGRID-ORCS" id="83903">
    <property type="hits" value="77 hits in 1196 CRISPR screens"/>
</dbReference>
<dbReference type="EvolutionaryTrace" id="Q8TF76"/>
<dbReference type="GeneWiki" id="GSG2"/>
<dbReference type="GenomeRNAi" id="83903"/>
<dbReference type="Pharos" id="Q8TF76">
    <property type="development level" value="Tchem"/>
</dbReference>
<dbReference type="PRO" id="PR:Q8TF76"/>
<dbReference type="Proteomes" id="UP000005640">
    <property type="component" value="Chromosome 17"/>
</dbReference>
<dbReference type="RNAct" id="Q8TF76">
    <property type="molecule type" value="protein"/>
</dbReference>
<dbReference type="Bgee" id="ENSG00000177602">
    <property type="expression patterns" value="Expressed in pancreatic ductal cell and 104 other cell types or tissues"/>
</dbReference>
<dbReference type="GO" id="GO:0005813">
    <property type="term" value="C:centrosome"/>
    <property type="evidence" value="ECO:0000314"/>
    <property type="project" value="UniProtKB"/>
</dbReference>
<dbReference type="GO" id="GO:0005694">
    <property type="term" value="C:chromosome"/>
    <property type="evidence" value="ECO:0007669"/>
    <property type="project" value="UniProtKB-SubCell"/>
</dbReference>
<dbReference type="GO" id="GO:0005737">
    <property type="term" value="C:cytoplasm"/>
    <property type="evidence" value="ECO:0000318"/>
    <property type="project" value="GO_Central"/>
</dbReference>
<dbReference type="GO" id="GO:0005654">
    <property type="term" value="C:nucleoplasm"/>
    <property type="evidence" value="ECO:0000314"/>
    <property type="project" value="HPA"/>
</dbReference>
<dbReference type="GO" id="GO:0005634">
    <property type="term" value="C:nucleus"/>
    <property type="evidence" value="ECO:0000314"/>
    <property type="project" value="UniProtKB"/>
</dbReference>
<dbReference type="GO" id="GO:0005819">
    <property type="term" value="C:spindle"/>
    <property type="evidence" value="ECO:0000314"/>
    <property type="project" value="UniProtKB"/>
</dbReference>
<dbReference type="GO" id="GO:0005524">
    <property type="term" value="F:ATP binding"/>
    <property type="evidence" value="ECO:0000314"/>
    <property type="project" value="UniProtKB"/>
</dbReference>
<dbReference type="GO" id="GO:0072354">
    <property type="term" value="F:histone H3T3 kinase activity"/>
    <property type="evidence" value="ECO:0000315"/>
    <property type="project" value="UniProtKB"/>
</dbReference>
<dbReference type="GO" id="GO:0004672">
    <property type="term" value="F:protein kinase activity"/>
    <property type="evidence" value="ECO:0000314"/>
    <property type="project" value="UniProtKB"/>
</dbReference>
<dbReference type="GO" id="GO:0106310">
    <property type="term" value="F:protein serine kinase activity"/>
    <property type="evidence" value="ECO:0007669"/>
    <property type="project" value="RHEA"/>
</dbReference>
<dbReference type="GO" id="GO:0035556">
    <property type="term" value="P:intracellular signal transduction"/>
    <property type="evidence" value="ECO:0000314"/>
    <property type="project" value="UniProtKB"/>
</dbReference>
<dbReference type="GO" id="GO:0000278">
    <property type="term" value="P:mitotic cell cycle"/>
    <property type="evidence" value="ECO:0000318"/>
    <property type="project" value="GO_Central"/>
</dbReference>
<dbReference type="GO" id="GO:0007064">
    <property type="term" value="P:mitotic sister chromatid cohesion"/>
    <property type="evidence" value="ECO:0000315"/>
    <property type="project" value="UniProtKB"/>
</dbReference>
<dbReference type="GO" id="GO:0007094">
    <property type="term" value="P:mitotic spindle assembly checkpoint signaling"/>
    <property type="evidence" value="ECO:0000315"/>
    <property type="project" value="UniProtKB"/>
</dbReference>
<dbReference type="GO" id="GO:0071459">
    <property type="term" value="P:protein localization to chromosome, centromeric region"/>
    <property type="evidence" value="ECO:0000315"/>
    <property type="project" value="UniProtKB"/>
</dbReference>
<dbReference type="GO" id="GO:0006468">
    <property type="term" value="P:protein phosphorylation"/>
    <property type="evidence" value="ECO:0000314"/>
    <property type="project" value="UniProtKB"/>
</dbReference>
<dbReference type="FunFam" id="1.10.510.10:FF:000401">
    <property type="entry name" value="serine/threonine-protein kinase haspin"/>
    <property type="match status" value="1"/>
</dbReference>
<dbReference type="FunFam" id="3.30.200.20:FF:000409">
    <property type="entry name" value="serine/threonine-protein kinase haspin"/>
    <property type="match status" value="1"/>
</dbReference>
<dbReference type="Gene3D" id="3.30.200.20">
    <property type="entry name" value="Phosphorylase Kinase, domain 1"/>
    <property type="match status" value="1"/>
</dbReference>
<dbReference type="Gene3D" id="1.10.510.10">
    <property type="entry name" value="Transferase(Phosphotransferase) domain 1"/>
    <property type="match status" value="1"/>
</dbReference>
<dbReference type="IDEAL" id="IID00574"/>
<dbReference type="InterPro" id="IPR024604">
    <property type="entry name" value="GSG2_C"/>
</dbReference>
<dbReference type="InterPro" id="IPR011009">
    <property type="entry name" value="Kinase-like_dom_sf"/>
</dbReference>
<dbReference type="InterPro" id="IPR000719">
    <property type="entry name" value="Prot_kinase_dom"/>
</dbReference>
<dbReference type="InterPro" id="IPR017441">
    <property type="entry name" value="Protein_kinase_ATP_BS"/>
</dbReference>
<dbReference type="PANTHER" id="PTHR24419">
    <property type="entry name" value="INTERLEUKIN-1 RECEPTOR-ASSOCIATED KINASE"/>
    <property type="match status" value="1"/>
</dbReference>
<dbReference type="PANTHER" id="PTHR24419:SF18">
    <property type="entry name" value="SERINE_THREONINE-PROTEIN KINASE HASPIN"/>
    <property type="match status" value="1"/>
</dbReference>
<dbReference type="Pfam" id="PF12330">
    <property type="entry name" value="Haspin_kinase"/>
    <property type="match status" value="1"/>
</dbReference>
<dbReference type="SMART" id="SM01331">
    <property type="entry name" value="DUF3635"/>
    <property type="match status" value="1"/>
</dbReference>
<dbReference type="SMART" id="SM00220">
    <property type="entry name" value="S_TKc"/>
    <property type="match status" value="1"/>
</dbReference>
<dbReference type="SUPFAM" id="SSF56112">
    <property type="entry name" value="Protein kinase-like (PK-like)"/>
    <property type="match status" value="1"/>
</dbReference>
<dbReference type="PROSITE" id="PS00107">
    <property type="entry name" value="PROTEIN_KINASE_ATP"/>
    <property type="match status" value="1"/>
</dbReference>
<dbReference type="PROSITE" id="PS50011">
    <property type="entry name" value="PROTEIN_KINASE_DOM"/>
    <property type="match status" value="1"/>
</dbReference>
<organism>
    <name type="scientific">Homo sapiens</name>
    <name type="common">Human</name>
    <dbReference type="NCBI Taxonomy" id="9606"/>
    <lineage>
        <taxon>Eukaryota</taxon>
        <taxon>Metazoa</taxon>
        <taxon>Chordata</taxon>
        <taxon>Craniata</taxon>
        <taxon>Vertebrata</taxon>
        <taxon>Euteleostomi</taxon>
        <taxon>Mammalia</taxon>
        <taxon>Eutheria</taxon>
        <taxon>Euarchontoglires</taxon>
        <taxon>Primates</taxon>
        <taxon>Haplorrhini</taxon>
        <taxon>Catarrhini</taxon>
        <taxon>Hominidae</taxon>
        <taxon>Homo</taxon>
    </lineage>
</organism>
<gene>
    <name evidence="20" type="primary">HASPIN</name>
    <name evidence="20" type="synonym">GSG2</name>
</gene>
<reference evidence="18" key="1">
    <citation type="journal article" date="2001" name="Mol. Hum. Reprod.">
        <title>Cloning and characterization of human haspin gene encoding haploid germ cell-specific nuclear protein kinase.</title>
        <authorList>
            <person name="Tanaka H."/>
            <person name="Iguchi N."/>
            <person name="Nakamura Y."/>
            <person name="Kohroki J."/>
            <person name="de Carvalho C.E."/>
            <person name="Nishimune Y."/>
        </authorList>
    </citation>
    <scope>NUCLEOTIDE SEQUENCE [MRNA] (ISOFORM 1)</scope>
    <scope>FUNCTION</scope>
    <scope>TISSUE SPECIFICITY</scope>
    <scope>SUBCELLULAR LOCATION</scope>
    <scope>CHROMOSOMAL LOCATION</scope>
    <source>
        <tissue>Testis</tissue>
    </source>
</reference>
<reference key="2">
    <citation type="submission" date="2006-11" db="EMBL/GenBank/DDBJ databases">
        <authorList>
            <person name="Tanaka H."/>
        </authorList>
    </citation>
    <scope>SEQUENCE REVISION TO 204; 328 AND 378</scope>
</reference>
<reference evidence="18" key="3">
    <citation type="journal article" date="2001" name="Gene">
        <title>The Haspin gene: location in an intron of the Integrin Alpha-E gene, associated transcription of an Integrin alpha-E-derived RNA and expression in diploid as well as haploid cells.</title>
        <authorList>
            <person name="Higgins J.M.G."/>
        </authorList>
    </citation>
    <scope>NUCLEOTIDE SEQUENCE [MRNA] (ISOFORM 1)</scope>
    <scope>TISSUE SPECIFICITY</scope>
    <scope>VARIANTS CYS-82; ASP-204; THR-328 AND ALA-378</scope>
    <source>
        <tissue evidence="19">Testis</tissue>
    </source>
</reference>
<reference evidence="18" key="4">
    <citation type="journal article" date="2004" name="Nat. Genet.">
        <title>Complete sequencing and characterization of 21,243 full-length human cDNAs.</title>
        <authorList>
            <person name="Ota T."/>
            <person name="Suzuki Y."/>
            <person name="Nishikawa T."/>
            <person name="Otsuki T."/>
            <person name="Sugiyama T."/>
            <person name="Irie R."/>
            <person name="Wakamatsu A."/>
            <person name="Hayashi K."/>
            <person name="Sato H."/>
            <person name="Nagai K."/>
            <person name="Kimura K."/>
            <person name="Makita H."/>
            <person name="Sekine M."/>
            <person name="Obayashi M."/>
            <person name="Nishi T."/>
            <person name="Shibahara T."/>
            <person name="Tanaka T."/>
            <person name="Ishii S."/>
            <person name="Yamamoto J."/>
            <person name="Saito K."/>
            <person name="Kawai Y."/>
            <person name="Isono Y."/>
            <person name="Nakamura Y."/>
            <person name="Nagahari K."/>
            <person name="Murakami K."/>
            <person name="Yasuda T."/>
            <person name="Iwayanagi T."/>
            <person name="Wagatsuma M."/>
            <person name="Shiratori A."/>
            <person name="Sudo H."/>
            <person name="Hosoiri T."/>
            <person name="Kaku Y."/>
            <person name="Kodaira H."/>
            <person name="Kondo H."/>
            <person name="Sugawara M."/>
            <person name="Takahashi M."/>
            <person name="Kanda K."/>
            <person name="Yokoi T."/>
            <person name="Furuya T."/>
            <person name="Kikkawa E."/>
            <person name="Omura Y."/>
            <person name="Abe K."/>
            <person name="Kamihara K."/>
            <person name="Katsuta N."/>
            <person name="Sato K."/>
            <person name="Tanikawa M."/>
            <person name="Yamazaki M."/>
            <person name="Ninomiya K."/>
            <person name="Ishibashi T."/>
            <person name="Yamashita H."/>
            <person name="Murakawa K."/>
            <person name="Fujimori K."/>
            <person name="Tanai H."/>
            <person name="Kimata M."/>
            <person name="Watanabe M."/>
            <person name="Hiraoka S."/>
            <person name="Chiba Y."/>
            <person name="Ishida S."/>
            <person name="Ono Y."/>
            <person name="Takiguchi S."/>
            <person name="Watanabe S."/>
            <person name="Yosida M."/>
            <person name="Hotuta T."/>
            <person name="Kusano J."/>
            <person name="Kanehori K."/>
            <person name="Takahashi-Fujii A."/>
            <person name="Hara H."/>
            <person name="Tanase T.-O."/>
            <person name="Nomura Y."/>
            <person name="Togiya S."/>
            <person name="Komai F."/>
            <person name="Hara R."/>
            <person name="Takeuchi K."/>
            <person name="Arita M."/>
            <person name="Imose N."/>
            <person name="Musashino K."/>
            <person name="Yuuki H."/>
            <person name="Oshima A."/>
            <person name="Sasaki N."/>
            <person name="Aotsuka S."/>
            <person name="Yoshikawa Y."/>
            <person name="Matsunawa H."/>
            <person name="Ichihara T."/>
            <person name="Shiohata N."/>
            <person name="Sano S."/>
            <person name="Moriya S."/>
            <person name="Momiyama H."/>
            <person name="Satoh N."/>
            <person name="Takami S."/>
            <person name="Terashima Y."/>
            <person name="Suzuki O."/>
            <person name="Nakagawa S."/>
            <person name="Senoh A."/>
            <person name="Mizoguchi H."/>
            <person name="Goto Y."/>
            <person name="Shimizu F."/>
            <person name="Wakebe H."/>
            <person name="Hishigaki H."/>
            <person name="Watanabe T."/>
            <person name="Sugiyama A."/>
            <person name="Takemoto M."/>
            <person name="Kawakami B."/>
            <person name="Yamazaki M."/>
            <person name="Watanabe K."/>
            <person name="Kumagai A."/>
            <person name="Itakura S."/>
            <person name="Fukuzumi Y."/>
            <person name="Fujimori Y."/>
            <person name="Komiyama M."/>
            <person name="Tashiro H."/>
            <person name="Tanigami A."/>
            <person name="Fujiwara T."/>
            <person name="Ono T."/>
            <person name="Yamada K."/>
            <person name="Fujii Y."/>
            <person name="Ozaki K."/>
            <person name="Hirao M."/>
            <person name="Ohmori Y."/>
            <person name="Kawabata A."/>
            <person name="Hikiji T."/>
            <person name="Kobatake N."/>
            <person name="Inagaki H."/>
            <person name="Ikema Y."/>
            <person name="Okamoto S."/>
            <person name="Okitani R."/>
            <person name="Kawakami T."/>
            <person name="Noguchi S."/>
            <person name="Itoh T."/>
            <person name="Shigeta K."/>
            <person name="Senba T."/>
            <person name="Matsumura K."/>
            <person name="Nakajima Y."/>
            <person name="Mizuno T."/>
            <person name="Morinaga M."/>
            <person name="Sasaki M."/>
            <person name="Togashi T."/>
            <person name="Oyama M."/>
            <person name="Hata H."/>
            <person name="Watanabe M."/>
            <person name="Komatsu T."/>
            <person name="Mizushima-Sugano J."/>
            <person name="Satoh T."/>
            <person name="Shirai Y."/>
            <person name="Takahashi Y."/>
            <person name="Nakagawa K."/>
            <person name="Okumura K."/>
            <person name="Nagase T."/>
            <person name="Nomura N."/>
            <person name="Kikuchi H."/>
            <person name="Masuho Y."/>
            <person name="Yamashita R."/>
            <person name="Nakai K."/>
            <person name="Yada T."/>
            <person name="Nakamura Y."/>
            <person name="Ohara O."/>
            <person name="Isogai T."/>
            <person name="Sugano S."/>
        </authorList>
    </citation>
    <scope>NUCLEOTIDE SEQUENCE [LARGE SCALE MRNA] (ISOFORM 2)</scope>
    <scope>VARIANT CYS-82</scope>
    <source>
        <tissue evidence="6">Peripheral blood</tissue>
    </source>
</reference>
<reference key="5">
    <citation type="journal article" date="2006" name="Nature">
        <title>DNA sequence of human chromosome 17 and analysis of rearrangement in the human lineage.</title>
        <authorList>
            <person name="Zody M.C."/>
            <person name="Garber M."/>
            <person name="Adams D.J."/>
            <person name="Sharpe T."/>
            <person name="Harrow J."/>
            <person name="Lupski J.R."/>
            <person name="Nicholson C."/>
            <person name="Searle S.M."/>
            <person name="Wilming L."/>
            <person name="Young S.K."/>
            <person name="Abouelleil A."/>
            <person name="Allen N.R."/>
            <person name="Bi W."/>
            <person name="Bloom T."/>
            <person name="Borowsky M.L."/>
            <person name="Bugalter B.E."/>
            <person name="Butler J."/>
            <person name="Chang J.L."/>
            <person name="Chen C.-K."/>
            <person name="Cook A."/>
            <person name="Corum B."/>
            <person name="Cuomo C.A."/>
            <person name="de Jong P.J."/>
            <person name="DeCaprio D."/>
            <person name="Dewar K."/>
            <person name="FitzGerald M."/>
            <person name="Gilbert J."/>
            <person name="Gibson R."/>
            <person name="Gnerre S."/>
            <person name="Goldstein S."/>
            <person name="Grafham D.V."/>
            <person name="Grocock R."/>
            <person name="Hafez N."/>
            <person name="Hagopian D.S."/>
            <person name="Hart E."/>
            <person name="Norman C.H."/>
            <person name="Humphray S."/>
            <person name="Jaffe D.B."/>
            <person name="Jones M."/>
            <person name="Kamal M."/>
            <person name="Khodiyar V.K."/>
            <person name="LaButti K."/>
            <person name="Laird G."/>
            <person name="Lehoczky J."/>
            <person name="Liu X."/>
            <person name="Lokyitsang T."/>
            <person name="Loveland J."/>
            <person name="Lui A."/>
            <person name="Macdonald P."/>
            <person name="Major J.E."/>
            <person name="Matthews L."/>
            <person name="Mauceli E."/>
            <person name="McCarroll S.A."/>
            <person name="Mihalev A.H."/>
            <person name="Mudge J."/>
            <person name="Nguyen C."/>
            <person name="Nicol R."/>
            <person name="O'Leary S.B."/>
            <person name="Osoegawa K."/>
            <person name="Schwartz D.C."/>
            <person name="Shaw-Smith C."/>
            <person name="Stankiewicz P."/>
            <person name="Steward C."/>
            <person name="Swarbreck D."/>
            <person name="Venkataraman V."/>
            <person name="Whittaker C.A."/>
            <person name="Yang X."/>
            <person name="Zimmer A.R."/>
            <person name="Bradley A."/>
            <person name="Hubbard T."/>
            <person name="Birren B.W."/>
            <person name="Rogers J."/>
            <person name="Lander E.S."/>
            <person name="Nusbaum C."/>
        </authorList>
    </citation>
    <scope>NUCLEOTIDE SEQUENCE [LARGE SCALE GENOMIC DNA]</scope>
</reference>
<reference key="6">
    <citation type="journal article" date="2004" name="Genome Res.">
        <title>The status, quality, and expansion of the NIH full-length cDNA project: the Mammalian Gene Collection (MGC).</title>
        <authorList>
            <consortium name="The MGC Project Team"/>
        </authorList>
    </citation>
    <scope>NUCLEOTIDE SEQUENCE [LARGE SCALE MRNA] (ISOFORM 1)</scope>
    <scope>VARIANTS CYS-82; ASP-204; THR-328 AND ALA-378</scope>
    <source>
        <tissue>Testis</tissue>
    </source>
</reference>
<reference key="7">
    <citation type="journal article" date="2005" name="Genes Dev.">
        <title>The kinase haspin is required for mitotic histone H3 Thr 3 phosphorylation and normal metaphase chromosome alignment.</title>
        <authorList>
            <person name="Dai J."/>
            <person name="Sultan S."/>
            <person name="Taylor S.S."/>
            <person name="Higgins J.M.G."/>
        </authorList>
    </citation>
    <scope>FUNCTION IN PHOSPHORYLATION OF HISTONE H3</scope>
    <scope>SUBCELLULAR LOCATION</scope>
    <scope>PHOSPHORYLATION</scope>
</reference>
<reference key="8">
    <citation type="journal article" date="2006" name="Dev. Cell">
        <title>Regulation of mitotic chromosome cohesion by Haspin and Aurora B.</title>
        <authorList>
            <person name="Dai J."/>
            <person name="Sullivan B.A."/>
            <person name="Higgins J.M."/>
        </authorList>
    </citation>
    <scope>FUNCTION IN CHROMOSOME COHESION</scope>
</reference>
<reference key="9">
    <citation type="journal article" date="2008" name="Proc. Natl. Acad. Sci. U.S.A.">
        <title>A quantitative atlas of mitotic phosphorylation.</title>
        <authorList>
            <person name="Dephoure N."/>
            <person name="Zhou C."/>
            <person name="Villen J."/>
            <person name="Beausoleil S.A."/>
            <person name="Bakalarski C.E."/>
            <person name="Elledge S.J."/>
            <person name="Gygi S.P."/>
        </authorList>
    </citation>
    <scope>PHOSPHORYLATION [LARGE SCALE ANALYSIS] AT SER-93; THR-97 AND SER-147</scope>
    <scope>IDENTIFICATION BY MASS SPECTROMETRY [LARGE SCALE ANALYSIS]</scope>
    <source>
        <tissue>Cervix carcinoma</tissue>
    </source>
</reference>
<reference key="10">
    <citation type="journal article" date="2009" name="Sci. Signal.">
        <title>Quantitative phosphoproteomic analysis of T cell receptor signaling reveals system-wide modulation of protein-protein interactions.</title>
        <authorList>
            <person name="Mayya V."/>
            <person name="Lundgren D.H."/>
            <person name="Hwang S.-I."/>
            <person name="Rezaul K."/>
            <person name="Wu L."/>
            <person name="Eng J.K."/>
            <person name="Rodionov V."/>
            <person name="Han D.K."/>
        </authorList>
    </citation>
    <scope>PHOSPHORYLATION [LARGE SCALE ANALYSIS] AT SER-58</scope>
    <scope>IDENTIFICATION BY MASS SPECTROMETRY [LARGE SCALE ANALYSIS]</scope>
    <source>
        <tissue>Leukemic T-cell</tissue>
    </source>
</reference>
<reference key="11">
    <citation type="journal article" date="2010" name="Science">
        <title>Histone H3 Thr-3 phosphorylation by Haspin positions Aurora B at centromeres in mitosis.</title>
        <authorList>
            <person name="Wang F."/>
            <person name="Dai J."/>
            <person name="Daum J.R."/>
            <person name="Niedzialkowska E."/>
            <person name="Banerjee B."/>
            <person name="Stukenberg P.T."/>
            <person name="Gorbsky G.J."/>
            <person name="Higgins J.M."/>
        </authorList>
    </citation>
    <scope>FUNCTION</scope>
</reference>
<reference key="12">
    <citation type="journal article" date="2010" name="Science">
        <title>Two histone marks establish the inner centromere and chromosome bi-orientation.</title>
        <authorList>
            <person name="Yamagishi Y."/>
            <person name="Honda T."/>
            <person name="Tanno Y."/>
            <person name="Watanabe Y."/>
        </authorList>
    </citation>
    <scope>FUNCTION</scope>
</reference>
<reference key="13">
    <citation type="journal article" date="2011" name="Curr. Biol.">
        <title>A positive feedback loop involving Haspin and Aurora B promotes CPC accumulation at centromeres in mitosis.</title>
        <authorList>
            <person name="Wang F."/>
            <person name="Ulyanova N.P."/>
            <person name="van der Waal M.S."/>
            <person name="Patnaik D."/>
            <person name="Lens S.M."/>
            <person name="Higgins J.M."/>
        </authorList>
    </citation>
    <scope>PHOSPHORYLATION AT SER-93 AND SER-143 BY AURKB</scope>
    <scope>ACTIVITY REGULATION</scope>
    <scope>IDENTIFICATION BY MASS SPECTROMETRY</scope>
</reference>
<reference key="14">
    <citation type="journal article" date="2012" name="Oncogene">
        <title>Antitumor activity of a small-molecule inhibitor of the histone kinase Haspin.</title>
        <authorList>
            <person name="Huertas D."/>
            <person name="Soler M."/>
            <person name="Moreto J."/>
            <person name="Villanueva A."/>
            <person name="Martinez A."/>
            <person name="Vidal A."/>
            <person name="Charlton M."/>
            <person name="Moffat D."/>
            <person name="Patel S."/>
            <person name="McDermott J."/>
            <person name="Owen J."/>
            <person name="Brotherton D."/>
            <person name="Krige D."/>
            <person name="Cuthill S."/>
            <person name="Esteller M."/>
        </authorList>
    </citation>
    <scope>ACTIVITY REGULATION</scope>
</reference>
<reference key="15">
    <citation type="journal article" date="2013" name="J. Proteome Res.">
        <title>Toward a comprehensive characterization of a human cancer cell phosphoproteome.</title>
        <authorList>
            <person name="Zhou H."/>
            <person name="Di Palma S."/>
            <person name="Preisinger C."/>
            <person name="Peng M."/>
            <person name="Polat A.N."/>
            <person name="Heck A.J."/>
            <person name="Mohammed S."/>
        </authorList>
    </citation>
    <scope>PHOSPHORYLATION [LARGE SCALE ANALYSIS] AT SER-147</scope>
    <scope>IDENTIFICATION BY MASS SPECTROMETRY [LARGE SCALE ANALYSIS]</scope>
    <source>
        <tissue>Cervix carcinoma</tissue>
        <tissue>Erythroleukemia</tissue>
    </source>
</reference>
<reference key="16">
    <citation type="journal article" date="2009" name="Proc. Natl. Acad. Sci. U.S.A.">
        <title>Structure and functional characterization of the atypical human kinase haspin.</title>
        <authorList>
            <person name="Eswaran J."/>
            <person name="Patnaik D."/>
            <person name="Filippakopoulos P."/>
            <person name="Wang F."/>
            <person name="Stein R.L."/>
            <person name="Murray J.W."/>
            <person name="Higgins J.M."/>
            <person name="Knapp S."/>
        </authorList>
    </citation>
    <scope>X-RAY CRYSTALLOGRAPHY (1.8 ANGSTROMS) OF 465-798 IN COMPLEX WITH AMP AND INHIBITOR IODOTUBERCIDIN</scope>
    <scope>COFACTOR</scope>
    <scope>CATALYTIC ACTIVITY</scope>
    <scope>ACTIVITY REGULATION</scope>
    <scope>MUTAGENESIS OF LYS-511 AND HIS-651</scope>
</reference>
<reference key="17">
    <citation type="journal article" date="2009" name="Proc. Natl. Acad. Sci. U.S.A.">
        <title>Crystal structure of the catalytic domain of Haspin, an atypical kinase implicated in chromatin organization.</title>
        <authorList>
            <person name="Villa F."/>
            <person name="Capasso P."/>
            <person name="Tortorici M."/>
            <person name="Forneris F."/>
            <person name="de Marco A."/>
            <person name="Mattevi A."/>
            <person name="Musacchio A."/>
        </authorList>
    </citation>
    <scope>X-RAY CRYSTALLOGRAPHY (2.15 ANGSTROMS) OF 452-798</scope>
    <scope>CATALYTIC ACTIVITY</scope>
    <scope>MUTAGENESIS OF GLU-492; HIS-651; ASP-707; ASP-709; GLY-713 AND ASP-716</scope>
</reference>
<reference key="18">
    <citation type="journal article" date="2007" name="Nature">
        <title>Patterns of somatic mutation in human cancer genomes.</title>
        <authorList>
            <person name="Greenman C."/>
            <person name="Stephens P."/>
            <person name="Smith R."/>
            <person name="Dalgliesh G.L."/>
            <person name="Hunter C."/>
            <person name="Bignell G."/>
            <person name="Davies H."/>
            <person name="Teague J."/>
            <person name="Butler A."/>
            <person name="Stevens C."/>
            <person name="Edkins S."/>
            <person name="O'Meara S."/>
            <person name="Vastrik I."/>
            <person name="Schmidt E.E."/>
            <person name="Avis T."/>
            <person name="Barthorpe S."/>
            <person name="Bhamra G."/>
            <person name="Buck G."/>
            <person name="Choudhury B."/>
            <person name="Clements J."/>
            <person name="Cole J."/>
            <person name="Dicks E."/>
            <person name="Forbes S."/>
            <person name="Gray K."/>
            <person name="Halliday K."/>
            <person name="Harrison R."/>
            <person name="Hills K."/>
            <person name="Hinton J."/>
            <person name="Jenkinson A."/>
            <person name="Jones D."/>
            <person name="Menzies A."/>
            <person name="Mironenko T."/>
            <person name="Perry J."/>
            <person name="Raine K."/>
            <person name="Richardson D."/>
            <person name="Shepherd R."/>
            <person name="Small A."/>
            <person name="Tofts C."/>
            <person name="Varian J."/>
            <person name="Webb T."/>
            <person name="West S."/>
            <person name="Widaa S."/>
            <person name="Yates A."/>
            <person name="Cahill D.P."/>
            <person name="Louis D.N."/>
            <person name="Goldstraw P."/>
            <person name="Nicholson A.G."/>
            <person name="Brasseur F."/>
            <person name="Looijenga L."/>
            <person name="Weber B.L."/>
            <person name="Chiew Y.-E."/>
            <person name="DeFazio A."/>
            <person name="Greaves M.F."/>
            <person name="Green A.R."/>
            <person name="Campbell P."/>
            <person name="Birney E."/>
            <person name="Easton D.F."/>
            <person name="Chenevix-Trench G."/>
            <person name="Tan M.-H."/>
            <person name="Khoo S.K."/>
            <person name="Teh B.T."/>
            <person name="Yuen S.T."/>
            <person name="Leung S.Y."/>
            <person name="Wooster R."/>
            <person name="Futreal P.A."/>
            <person name="Stratton M.R."/>
        </authorList>
    </citation>
    <scope>VARIANTS [LARGE SCALE ANALYSIS] GLU-76; CYS-82; HIS-145; ASP-204; SER-283; LEU-301; THR-328; ALA-378 AND VAL-706</scope>
</reference>
<name>HASP_HUMAN</name>
<feature type="chain" id="PRO_0000085989" description="Serine/threonine-protein kinase haspin">
    <location>
        <begin position="1"/>
        <end position="798"/>
    </location>
</feature>
<feature type="domain" description="Protein kinase" evidence="2 18">
    <location>
        <begin position="484"/>
        <end position="798"/>
    </location>
</feature>
<feature type="region of interest" description="Disordered" evidence="3">
    <location>
        <begin position="1"/>
        <end position="110"/>
    </location>
</feature>
<feature type="region of interest" description="Disordered" evidence="3">
    <location>
        <begin position="275"/>
        <end position="350"/>
    </location>
</feature>
<feature type="compositionally biased region" description="Acidic residues" evidence="3">
    <location>
        <begin position="59"/>
        <end position="70"/>
    </location>
</feature>
<feature type="compositionally biased region" description="Basic and acidic residues" evidence="3">
    <location>
        <begin position="300"/>
        <end position="315"/>
    </location>
</feature>
<feature type="active site" description="Proton acceptor" evidence="2">
    <location>
        <position position="649"/>
    </location>
</feature>
<feature type="binding site" evidence="2">
    <location>
        <begin position="490"/>
        <end position="498"/>
    </location>
    <ligand>
        <name>ATP</name>
        <dbReference type="ChEBI" id="CHEBI:30616"/>
    </ligand>
</feature>
<feature type="binding site" evidence="2">
    <location>
        <position position="511"/>
    </location>
    <ligand>
        <name>ATP</name>
        <dbReference type="ChEBI" id="CHEBI:30616"/>
    </ligand>
</feature>
<feature type="binding site" evidence="12 21">
    <location>
        <begin position="606"/>
        <end position="611"/>
    </location>
    <ligand>
        <name>ATP</name>
        <dbReference type="ChEBI" id="CHEBI:30616"/>
    </ligand>
</feature>
<feature type="binding site" evidence="12 21">
    <location>
        <begin position="649"/>
        <end position="654"/>
    </location>
    <ligand>
        <name>ATP</name>
        <dbReference type="ChEBI" id="CHEBI:30616"/>
    </ligand>
</feature>
<feature type="binding site" evidence="12">
    <location>
        <begin position="687"/>
        <end position="689"/>
    </location>
    <ligand>
        <name>ATP</name>
        <dbReference type="ChEBI" id="CHEBI:30616"/>
    </ligand>
</feature>
<feature type="modified residue" description="Phosphoserine" evidence="23">
    <location>
        <position position="58"/>
    </location>
</feature>
<feature type="modified residue" description="Phosphoserine; by AURKB" evidence="15 22">
    <location>
        <position position="93"/>
    </location>
</feature>
<feature type="modified residue" description="Phosphothreonine" evidence="22">
    <location>
        <position position="97"/>
    </location>
</feature>
<feature type="modified residue" description="Phosphoserine; by AURKB" evidence="15">
    <location>
        <position position="143"/>
    </location>
</feature>
<feature type="modified residue" description="Phosphoserine" evidence="22 24">
    <location>
        <position position="147"/>
    </location>
</feature>
<feature type="splice variant" id="VSP_050671" description="In isoform 2." evidence="17">
    <original>Q</original>
    <variation>H</variation>
    <location>
        <position position="314"/>
    </location>
</feature>
<feature type="splice variant" id="VSP_050672" description="In isoform 2." evidence="17">
    <location>
        <begin position="315"/>
        <end position="798"/>
    </location>
</feature>
<feature type="sequence variant" id="VAR_040540" description="In dbSNP:rs11653889." evidence="10">
    <original>V</original>
    <variation>E</variation>
    <location>
        <position position="76"/>
    </location>
</feature>
<feature type="sequence variant" id="VAR_040541" description="In dbSNP:rs9907144." evidence="5 6 7 10">
    <original>R</original>
    <variation>C</variation>
    <location>
        <position position="82"/>
    </location>
</feature>
<feature type="sequence variant" id="VAR_040542" description="In dbSNP:rs55991903." evidence="10">
    <original>R</original>
    <variation>H</variation>
    <location>
        <position position="145"/>
    </location>
</feature>
<feature type="sequence variant" id="VAR_027405" description="In dbSNP:rs220462." evidence="5 7 10">
    <original>G</original>
    <variation>D</variation>
    <location>
        <position position="204"/>
    </location>
</feature>
<feature type="sequence variant" id="VAR_040543" description="In dbSNP:rs56224301." evidence="10">
    <original>G</original>
    <variation>S</variation>
    <location>
        <position position="283"/>
    </location>
</feature>
<feature type="sequence variant" id="VAR_040544" description="In dbSNP:rs55649477." evidence="10">
    <original>Q</original>
    <variation>L</variation>
    <location>
        <position position="301"/>
    </location>
</feature>
<feature type="sequence variant" id="VAR_027406" description="In dbSNP:rs220461." evidence="5 7 10">
    <original>I</original>
    <variation>T</variation>
    <location>
        <position position="328"/>
    </location>
</feature>
<feature type="sequence variant" id="VAR_027407" description="In dbSNP:rs3809806." evidence="5 7 10">
    <original>V</original>
    <variation>A</variation>
    <location>
        <position position="378"/>
    </location>
</feature>
<feature type="sequence variant" id="VAR_027408" description="In dbSNP:rs7223226.">
    <original>N</original>
    <variation>D</variation>
    <location>
        <position position="422"/>
    </location>
</feature>
<feature type="sequence variant" id="VAR_040545" description="In dbSNP:rs56134695." evidence="10">
    <original>M</original>
    <variation>V</variation>
    <location>
        <position position="706"/>
    </location>
</feature>
<feature type="mutagenesis site" description="Markedly reduced affinity for histone H3 and reduced histone H3 phosphorylation." evidence="11">
    <original>E</original>
    <variation>A</variation>
    <location>
        <position position="492"/>
    </location>
</feature>
<feature type="mutagenesis site" description="Strongly reduced enzyme activity." evidence="12">
    <original>K</original>
    <variation>A</variation>
    <location>
        <position position="511"/>
    </location>
</feature>
<feature type="mutagenesis site" description="Strongly reduced enzyme activity, markedly reduced affinity for histone H3." evidence="11 12">
    <original>H</original>
    <variation>A</variation>
    <location>
        <position position="651"/>
    </location>
</feature>
<feature type="mutagenesis site" description="Markedly reduced affinity for histone H3 and reduced histone H3 phosphorylation." evidence="11">
    <original>D</original>
    <variation>L</variation>
    <location>
        <position position="707"/>
    </location>
</feature>
<feature type="mutagenesis site" description="Markedly reduced affinity for histone H3 and reduced histone H3 phosphorylation." evidence="11">
    <original>D</original>
    <variation>N</variation>
    <location>
        <position position="709"/>
    </location>
</feature>
<feature type="mutagenesis site" description="Markedly reduced affinity for histone H3 and reduced histone H3 phosphorylation." evidence="11">
    <original>G</original>
    <variation>F</variation>
    <location>
        <position position="713"/>
    </location>
</feature>
<feature type="mutagenesis site" description="Markedly reduced histone H3 phosphorylation." evidence="11">
    <original>D</original>
    <variation>L</variation>
    <location>
        <position position="716"/>
    </location>
</feature>
<feature type="sequence conflict" description="In Ref. 4; BAB71255." evidence="18" ref="4">
    <original>R</original>
    <variation>S</variation>
    <location>
        <position position="273"/>
    </location>
</feature>
<feature type="sequence conflict" description="In Ref. 6; AAH47457." evidence="18" ref="6">
    <original>K</original>
    <variation>E</variation>
    <location>
        <position position="339"/>
    </location>
</feature>
<feature type="helix" evidence="27">
    <location>
        <begin position="454"/>
        <end position="466"/>
    </location>
</feature>
<feature type="helix" evidence="26">
    <location>
        <begin position="475"/>
        <end position="478"/>
    </location>
</feature>
<feature type="helix" evidence="26">
    <location>
        <begin position="481"/>
        <end position="485"/>
    </location>
</feature>
<feature type="strand" evidence="26">
    <location>
        <begin position="488"/>
        <end position="493"/>
    </location>
</feature>
<feature type="strand" evidence="26">
    <location>
        <begin position="496"/>
        <end position="503"/>
    </location>
</feature>
<feature type="strand" evidence="26">
    <location>
        <begin position="506"/>
        <end position="516"/>
    </location>
</feature>
<feature type="strand" evidence="26">
    <location>
        <begin position="518"/>
        <end position="521"/>
    </location>
</feature>
<feature type="helix" evidence="26">
    <location>
        <begin position="529"/>
        <end position="544"/>
    </location>
</feature>
<feature type="helix" evidence="26">
    <location>
        <begin position="545"/>
        <end position="547"/>
    </location>
</feature>
<feature type="strand" evidence="26">
    <location>
        <begin position="549"/>
        <end position="552"/>
    </location>
</feature>
<feature type="strand" evidence="25">
    <location>
        <begin position="554"/>
        <end position="556"/>
    </location>
</feature>
<feature type="strand" evidence="26">
    <location>
        <begin position="559"/>
        <end position="568"/>
    </location>
</feature>
<feature type="helix" evidence="26">
    <location>
        <begin position="571"/>
        <end position="583"/>
    </location>
</feature>
<feature type="strand" evidence="26">
    <location>
        <begin position="599"/>
        <end position="606"/>
    </location>
</feature>
<feature type="turn" evidence="26">
    <location>
        <begin position="612"/>
        <end position="618"/>
    </location>
</feature>
<feature type="helix" evidence="26">
    <location>
        <begin position="622"/>
        <end position="643"/>
    </location>
</feature>
<feature type="helix" evidence="26">
    <location>
        <begin position="652"/>
        <end position="654"/>
    </location>
</feature>
<feature type="strand" evidence="26">
    <location>
        <begin position="655"/>
        <end position="659"/>
    </location>
</feature>
<feature type="strand" evidence="26">
    <location>
        <begin position="663"/>
        <end position="669"/>
    </location>
</feature>
<feature type="strand" evidence="26">
    <location>
        <begin position="672"/>
        <end position="677"/>
    </location>
</feature>
<feature type="strand" evidence="26">
    <location>
        <begin position="681"/>
        <end position="685"/>
    </location>
</feature>
<feature type="strand" evidence="26">
    <location>
        <begin position="692"/>
        <end position="695"/>
    </location>
</feature>
<feature type="strand" evidence="26">
    <location>
        <begin position="698"/>
        <end position="700"/>
    </location>
</feature>
<feature type="helix" evidence="26">
    <location>
        <begin position="709"/>
        <end position="711"/>
    </location>
</feature>
<feature type="helix" evidence="26">
    <location>
        <begin position="717"/>
        <end position="729"/>
    </location>
</feature>
<feature type="helix" evidence="26">
    <location>
        <begin position="739"/>
        <end position="754"/>
    </location>
</feature>
<feature type="strand" evidence="27">
    <location>
        <begin position="758"/>
        <end position="760"/>
    </location>
</feature>
<feature type="helix" evidence="26">
    <location>
        <begin position="765"/>
        <end position="780"/>
    </location>
</feature>
<feature type="helix" evidence="26">
    <location>
        <begin position="781"/>
        <end position="783"/>
    </location>
</feature>
<feature type="strand" evidence="26">
    <location>
        <begin position="784"/>
        <end position="786"/>
    </location>
</feature>
<feature type="helix" evidence="26">
    <location>
        <begin position="787"/>
        <end position="793"/>
    </location>
</feature>
<feature type="helix" evidence="26">
    <location>
        <begin position="795"/>
        <end position="797"/>
    </location>
</feature>
<protein>
    <recommendedName>
        <fullName>Serine/threonine-protein kinase haspin</fullName>
        <ecNumber evidence="11 12">2.7.11.1</ecNumber>
    </recommendedName>
    <alternativeName>
        <fullName>Germ cell-specific gene 2 protein</fullName>
    </alternativeName>
    <alternativeName>
        <fullName>H-haspin</fullName>
    </alternativeName>
    <alternativeName>
        <fullName>Haploid germ cell-specific nuclear protein kinase</fullName>
    </alternativeName>
</protein>